<reference key="1">
    <citation type="journal article" date="1997" name="Nature">
        <title>The complete genome sequence of the hyperthermophilic, sulphate-reducing archaeon Archaeoglobus fulgidus.</title>
        <authorList>
            <person name="Klenk H.-P."/>
            <person name="Clayton R.A."/>
            <person name="Tomb J.-F."/>
            <person name="White O."/>
            <person name="Nelson K.E."/>
            <person name="Ketchum K.A."/>
            <person name="Dodson R.J."/>
            <person name="Gwinn M.L."/>
            <person name="Hickey E.K."/>
            <person name="Peterson J.D."/>
            <person name="Richardson D.L."/>
            <person name="Kerlavage A.R."/>
            <person name="Graham D.E."/>
            <person name="Kyrpides N.C."/>
            <person name="Fleischmann R.D."/>
            <person name="Quackenbush J."/>
            <person name="Lee N.H."/>
            <person name="Sutton G.G."/>
            <person name="Gill S.R."/>
            <person name="Kirkness E.F."/>
            <person name="Dougherty B.A."/>
            <person name="McKenney K."/>
            <person name="Adams M.D."/>
            <person name="Loftus B.J."/>
            <person name="Peterson S.N."/>
            <person name="Reich C.I."/>
            <person name="McNeil L.K."/>
            <person name="Badger J.H."/>
            <person name="Glodek A."/>
            <person name="Zhou L."/>
            <person name="Overbeek R."/>
            <person name="Gocayne J.D."/>
            <person name="Weidman J.F."/>
            <person name="McDonald L.A."/>
            <person name="Utterback T.R."/>
            <person name="Cotton M.D."/>
            <person name="Spriggs T."/>
            <person name="Artiach P."/>
            <person name="Kaine B.P."/>
            <person name="Sykes S.M."/>
            <person name="Sadow P.W."/>
            <person name="D'Andrea K.P."/>
            <person name="Bowman C."/>
            <person name="Fujii C."/>
            <person name="Garland S.A."/>
            <person name="Mason T.M."/>
            <person name="Olsen G.J."/>
            <person name="Fraser C.M."/>
            <person name="Smith H.O."/>
            <person name="Woese C.R."/>
            <person name="Venter J.C."/>
        </authorList>
    </citation>
    <scope>NUCLEOTIDE SEQUENCE [LARGE SCALE GENOMIC DNA]</scope>
    <source>
        <strain>ATCC 49558 / DSM 4304 / JCM 9628 / NBRC 100126 / VC-16</strain>
    </source>
</reference>
<protein>
    <recommendedName>
        <fullName>Uncharacterized protein AF_1109</fullName>
    </recommendedName>
</protein>
<dbReference type="EMBL" id="AE000782">
    <property type="protein sequence ID" value="AAB90144.1"/>
    <property type="molecule type" value="Genomic_DNA"/>
</dbReference>
<dbReference type="PIR" id="D69388">
    <property type="entry name" value="D69388"/>
</dbReference>
<dbReference type="RefSeq" id="WP_010878605.1">
    <property type="nucleotide sequence ID" value="NC_000917.1"/>
</dbReference>
<dbReference type="STRING" id="224325.AF_1109"/>
<dbReference type="PaxDb" id="224325-AF_1109"/>
<dbReference type="EnsemblBacteria" id="AAB90144">
    <property type="protein sequence ID" value="AAB90144"/>
    <property type="gene ID" value="AF_1109"/>
</dbReference>
<dbReference type="KEGG" id="afu:AF_1109"/>
<dbReference type="eggNOG" id="arCOG01121">
    <property type="taxonomic scope" value="Archaea"/>
</dbReference>
<dbReference type="HOGENOM" id="CLU_153623_0_0_2"/>
<dbReference type="OrthoDB" id="31559at2157"/>
<dbReference type="Proteomes" id="UP000002199">
    <property type="component" value="Chromosome"/>
</dbReference>
<dbReference type="GO" id="GO:0008270">
    <property type="term" value="F:zinc ion binding"/>
    <property type="evidence" value="ECO:0007669"/>
    <property type="project" value="UniProtKB-KW"/>
</dbReference>
<dbReference type="InterPro" id="IPR007527">
    <property type="entry name" value="Znf_SWIM"/>
</dbReference>
<dbReference type="Pfam" id="PF04434">
    <property type="entry name" value="SWIM"/>
    <property type="match status" value="1"/>
</dbReference>
<dbReference type="PROSITE" id="PS50966">
    <property type="entry name" value="ZF_SWIM"/>
    <property type="match status" value="1"/>
</dbReference>
<proteinExistence type="predicted"/>
<gene>
    <name type="ordered locus">AF_1109</name>
</gene>
<evidence type="ECO:0000255" key="1">
    <source>
        <dbReference type="PROSITE-ProRule" id="PRU00325"/>
    </source>
</evidence>
<keyword id="KW-0479">Metal-binding</keyword>
<keyword id="KW-1185">Reference proteome</keyword>
<keyword id="KW-0862">Zinc</keyword>
<keyword id="KW-0863">Zinc-finger</keyword>
<feature type="chain" id="PRO_0000127965" description="Uncharacterized protein AF_1109">
    <location>
        <begin position="1"/>
        <end position="113"/>
    </location>
</feature>
<feature type="zinc finger region" description="SWIM-type" evidence="1">
    <location>
        <begin position="49"/>
        <end position="91"/>
    </location>
</feature>
<sequence>MPLPSEVEKAARSGSEYELYKALLLSFGKRGDKAFEYLKRSKVKRYKDFFVVVGKEEYVVEGGFCTCPDFLVNLKGKSPCAHIIAVEVAKITGKYDYIDAYYVDYPDILRKKK</sequence>
<organism>
    <name type="scientific">Archaeoglobus fulgidus (strain ATCC 49558 / DSM 4304 / JCM 9628 / NBRC 100126 / VC-16)</name>
    <dbReference type="NCBI Taxonomy" id="224325"/>
    <lineage>
        <taxon>Archaea</taxon>
        <taxon>Methanobacteriati</taxon>
        <taxon>Methanobacteriota</taxon>
        <taxon>Archaeoglobi</taxon>
        <taxon>Archaeoglobales</taxon>
        <taxon>Archaeoglobaceae</taxon>
        <taxon>Archaeoglobus</taxon>
    </lineage>
</organism>
<accession>O29156</accession>
<name>Y1109_ARCFU</name>